<sequence length="366" mass="40308">MQSSLPQFTFKWPKGPEAIILTGTFDDWKGTLPMVKDPSGAFEITLPVTFDSPSSKFYFKFIVDGQWLPSKDYKVNIDEGVENNFITEEDVIKQRENGSSTLVPESTGLAVSKNAPLIEPEAEKRAKKLRKFKIKRVIKTNKQTGERSIFSQEVVELPDSEDETQQVNKTGKNADGLSGTTTIIENNVGVNEEKAIKPYEENHPKVNLVKSEGYVTDGLGKTQSSESRLYELSAEDLEKEEEEEDEDKGGGKDTSTSADAEASEDQNKEPLSKSAKFEKPEEKVPVSSITSHAKETSVKPTGKVATETQTYETKQGAPTAAAKKIEAKKATRPSKPKGTKETPNKGVQKNPAKNGGFFKKLAQLLK</sequence>
<reference key="1">
    <citation type="journal article" date="2007" name="Proc. Natl. Acad. Sci. U.S.A.">
        <title>Genome sequencing and comparative analysis of Saccharomyces cerevisiae strain YJM789.</title>
        <authorList>
            <person name="Wei W."/>
            <person name="McCusker J.H."/>
            <person name="Hyman R.W."/>
            <person name="Jones T."/>
            <person name="Ning Y."/>
            <person name="Cao Z."/>
            <person name="Gu Z."/>
            <person name="Bruno D."/>
            <person name="Miranda M."/>
            <person name="Nguyen M."/>
            <person name="Wilhelmy J."/>
            <person name="Komp C."/>
            <person name="Tamse R."/>
            <person name="Wang X."/>
            <person name="Jia P."/>
            <person name="Luedi P."/>
            <person name="Oefner P.J."/>
            <person name="David L."/>
            <person name="Dietrich F.S."/>
            <person name="Li Y."/>
            <person name="Davis R.W."/>
            <person name="Steinmetz L.M."/>
        </authorList>
    </citation>
    <scope>NUCLEOTIDE SEQUENCE [LARGE SCALE GENOMIC DNA]</scope>
    <source>
        <strain>YJM789</strain>
    </source>
</reference>
<feature type="chain" id="PRO_0000409625" description="Signal transduction protein MDG1">
    <location>
        <begin position="1"/>
        <end position="366"/>
    </location>
</feature>
<feature type="region of interest" description="Disordered" evidence="3">
    <location>
        <begin position="159"/>
        <end position="180"/>
    </location>
</feature>
<feature type="region of interest" description="Disordered" evidence="3">
    <location>
        <begin position="217"/>
        <end position="366"/>
    </location>
</feature>
<feature type="compositionally biased region" description="Acidic residues" evidence="3">
    <location>
        <begin position="233"/>
        <end position="247"/>
    </location>
</feature>
<feature type="compositionally biased region" description="Basic and acidic residues" evidence="3">
    <location>
        <begin position="265"/>
        <end position="284"/>
    </location>
</feature>
<feature type="modified residue" description="Phosphoserine" evidence="2">
    <location>
        <position position="160"/>
    </location>
</feature>
<feature type="modified residue" description="Phosphothreonine" evidence="2">
    <location>
        <position position="216"/>
    </location>
</feature>
<feature type="modified residue" description="Phosphoserine" evidence="2">
    <location>
        <position position="288"/>
    </location>
</feature>
<feature type="cross-link" description="Glycyl lysine isopeptide (Lys-Gly) (interchain with G-Cter in ubiquitin)" evidence="2">
    <location>
        <position position="314"/>
    </location>
</feature>
<keyword id="KW-1003">Cell membrane</keyword>
<keyword id="KW-1017">Isopeptide bond</keyword>
<keyword id="KW-0472">Membrane</keyword>
<keyword id="KW-0597">Phosphoprotein</keyword>
<keyword id="KW-0832">Ubl conjugation</keyword>
<comment type="function">
    <text evidence="1">Involved in G-protein mediated signal transduction and in the regulation of polarized cell growth in pheromone-induced cells.</text>
</comment>
<comment type="subcellular location">
    <subcellularLocation>
        <location evidence="1">Cell membrane</location>
        <topology evidence="1">Peripheral membrane protein</topology>
    </subcellularLocation>
</comment>
<comment type="similarity">
    <text evidence="4">Belongs to the CRP1/MDG1 family.</text>
</comment>
<name>MDG1_YEAS7</name>
<proteinExistence type="inferred from homology"/>
<evidence type="ECO:0000250" key="1"/>
<evidence type="ECO:0000250" key="2">
    <source>
        <dbReference type="UniProtKB" id="P53885"/>
    </source>
</evidence>
<evidence type="ECO:0000256" key="3">
    <source>
        <dbReference type="SAM" id="MobiDB-lite"/>
    </source>
</evidence>
<evidence type="ECO:0000305" key="4"/>
<gene>
    <name type="primary">MDG1</name>
    <name type="ORF">SCY_4623</name>
</gene>
<dbReference type="EMBL" id="AAFW02000067">
    <property type="protein sequence ID" value="EDN62644.1"/>
    <property type="molecule type" value="Genomic_DNA"/>
</dbReference>
<dbReference type="SMR" id="A6ZRR2"/>
<dbReference type="HOGENOM" id="CLU_765367_0_0_1"/>
<dbReference type="Proteomes" id="UP000007060">
    <property type="component" value="Unassembled WGS sequence"/>
</dbReference>
<dbReference type="GO" id="GO:0005737">
    <property type="term" value="C:cytoplasm"/>
    <property type="evidence" value="ECO:0007669"/>
    <property type="project" value="TreeGrafter"/>
</dbReference>
<dbReference type="GO" id="GO:0031588">
    <property type="term" value="C:nucleotide-activated protein kinase complex"/>
    <property type="evidence" value="ECO:0007669"/>
    <property type="project" value="TreeGrafter"/>
</dbReference>
<dbReference type="GO" id="GO:0005634">
    <property type="term" value="C:nucleus"/>
    <property type="evidence" value="ECO:0007669"/>
    <property type="project" value="TreeGrafter"/>
</dbReference>
<dbReference type="GO" id="GO:0005886">
    <property type="term" value="C:plasma membrane"/>
    <property type="evidence" value="ECO:0007669"/>
    <property type="project" value="UniProtKB-SubCell"/>
</dbReference>
<dbReference type="GO" id="GO:0019901">
    <property type="term" value="F:protein kinase binding"/>
    <property type="evidence" value="ECO:0007669"/>
    <property type="project" value="TreeGrafter"/>
</dbReference>
<dbReference type="GO" id="GO:0007165">
    <property type="term" value="P:signal transduction"/>
    <property type="evidence" value="ECO:0007669"/>
    <property type="project" value="TreeGrafter"/>
</dbReference>
<dbReference type="CDD" id="cd02859">
    <property type="entry name" value="E_set_AMPKbeta_like_N"/>
    <property type="match status" value="1"/>
</dbReference>
<dbReference type="Gene3D" id="2.60.40.10">
    <property type="entry name" value="Immunoglobulins"/>
    <property type="match status" value="1"/>
</dbReference>
<dbReference type="InterPro" id="IPR032640">
    <property type="entry name" value="AMPK1_CBM"/>
</dbReference>
<dbReference type="InterPro" id="IPR050827">
    <property type="entry name" value="CRP1_MDG1_kinase"/>
</dbReference>
<dbReference type="InterPro" id="IPR013783">
    <property type="entry name" value="Ig-like_fold"/>
</dbReference>
<dbReference type="InterPro" id="IPR014756">
    <property type="entry name" value="Ig_E-set"/>
</dbReference>
<dbReference type="PANTHER" id="PTHR10343">
    <property type="entry name" value="5'-AMP-ACTIVATED PROTEIN KINASE , BETA SUBUNIT"/>
    <property type="match status" value="1"/>
</dbReference>
<dbReference type="PANTHER" id="PTHR10343:SF81">
    <property type="entry name" value="CRUCIFORM DNA-RECOGNIZING PROTEIN 1-RELATED"/>
    <property type="match status" value="1"/>
</dbReference>
<dbReference type="Pfam" id="PF16561">
    <property type="entry name" value="AMPK1_CBM"/>
    <property type="match status" value="1"/>
</dbReference>
<dbReference type="SUPFAM" id="SSF81296">
    <property type="entry name" value="E set domains"/>
    <property type="match status" value="1"/>
</dbReference>
<accession>A6ZRR2</accession>
<protein>
    <recommendedName>
        <fullName>Signal transduction protein MDG1</fullName>
    </recommendedName>
    <alternativeName>
        <fullName>Multicopy suppressor of defective G-protein 1</fullName>
    </alternativeName>
</protein>
<organism>
    <name type="scientific">Saccharomyces cerevisiae (strain YJM789)</name>
    <name type="common">Baker's yeast</name>
    <dbReference type="NCBI Taxonomy" id="307796"/>
    <lineage>
        <taxon>Eukaryota</taxon>
        <taxon>Fungi</taxon>
        <taxon>Dikarya</taxon>
        <taxon>Ascomycota</taxon>
        <taxon>Saccharomycotina</taxon>
        <taxon>Saccharomycetes</taxon>
        <taxon>Saccharomycetales</taxon>
        <taxon>Saccharomycetaceae</taxon>
        <taxon>Saccharomyces</taxon>
    </lineage>
</organism>